<reference key="1">
    <citation type="journal article" date="2009" name="PLoS Pathog.">
        <title>Genomic evidence for the evolution of Streptococcus equi: host restriction, increased virulence, and genetic exchange with human pathogens.</title>
        <authorList>
            <person name="Holden M.T.G."/>
            <person name="Heather Z."/>
            <person name="Paillot R."/>
            <person name="Steward K.F."/>
            <person name="Webb K."/>
            <person name="Ainslie F."/>
            <person name="Jourdan T."/>
            <person name="Bason N.C."/>
            <person name="Holroyd N.E."/>
            <person name="Mungall K."/>
            <person name="Quail M.A."/>
            <person name="Sanders M."/>
            <person name="Simmonds M."/>
            <person name="Willey D."/>
            <person name="Brooks K."/>
            <person name="Aanensen D.M."/>
            <person name="Spratt B.G."/>
            <person name="Jolley K.A."/>
            <person name="Maiden M.C.J."/>
            <person name="Kehoe M."/>
            <person name="Chanter N."/>
            <person name="Bentley S.D."/>
            <person name="Robinson C."/>
            <person name="Maskell D.J."/>
            <person name="Parkhill J."/>
            <person name="Waller A.S."/>
        </authorList>
    </citation>
    <scope>NUCLEOTIDE SEQUENCE [LARGE SCALE GENOMIC DNA]</scope>
    <source>
        <strain>4047</strain>
    </source>
</reference>
<accession>C0M9D9</accession>
<proteinExistence type="inferred from homology"/>
<organism>
    <name type="scientific">Streptococcus equi subsp. equi (strain 4047)</name>
    <dbReference type="NCBI Taxonomy" id="553482"/>
    <lineage>
        <taxon>Bacteria</taxon>
        <taxon>Bacillati</taxon>
        <taxon>Bacillota</taxon>
        <taxon>Bacilli</taxon>
        <taxon>Lactobacillales</taxon>
        <taxon>Streptococcaceae</taxon>
        <taxon>Streptococcus</taxon>
    </lineage>
</organism>
<name>RS15_STRE4</name>
<feature type="chain" id="PRO_1000166438" description="Small ribosomal subunit protein uS15">
    <location>
        <begin position="1"/>
        <end position="89"/>
    </location>
</feature>
<gene>
    <name evidence="1" type="primary">rpsO</name>
    <name type="ordered locus">SEQ_1998</name>
</gene>
<sequence length="89" mass="10531">MAISKEKKNEIIAQYARHEGDTGSVEVQVAVLTWEINHLNNHIKEHKKDHATYRGLMKKIGHRRNLLAYLRRTDVNRYRELIQSLGLRR</sequence>
<keyword id="KW-0687">Ribonucleoprotein</keyword>
<keyword id="KW-0689">Ribosomal protein</keyword>
<keyword id="KW-0694">RNA-binding</keyword>
<keyword id="KW-0699">rRNA-binding</keyword>
<comment type="function">
    <text evidence="1">One of the primary rRNA binding proteins, it binds directly to 16S rRNA where it helps nucleate assembly of the platform of the 30S subunit by binding and bridging several RNA helices of the 16S rRNA.</text>
</comment>
<comment type="function">
    <text evidence="1">Forms an intersubunit bridge (bridge B4) with the 23S rRNA of the 50S subunit in the ribosome.</text>
</comment>
<comment type="subunit">
    <text evidence="1">Part of the 30S ribosomal subunit. Forms a bridge to the 50S subunit in the 70S ribosome, contacting the 23S rRNA.</text>
</comment>
<comment type="similarity">
    <text evidence="1">Belongs to the universal ribosomal protein uS15 family.</text>
</comment>
<dbReference type="EMBL" id="FM204883">
    <property type="protein sequence ID" value="CAW95256.1"/>
    <property type="molecule type" value="Genomic_DNA"/>
</dbReference>
<dbReference type="RefSeq" id="WP_003046456.1">
    <property type="nucleotide sequence ID" value="NC_012471.1"/>
</dbReference>
<dbReference type="SMR" id="C0M9D9"/>
<dbReference type="GeneID" id="83705665"/>
<dbReference type="KEGG" id="seu:SEQ_1998"/>
<dbReference type="HOGENOM" id="CLU_148518_0_0_9"/>
<dbReference type="OrthoDB" id="9799262at2"/>
<dbReference type="Proteomes" id="UP000001365">
    <property type="component" value="Chromosome"/>
</dbReference>
<dbReference type="GO" id="GO:0022627">
    <property type="term" value="C:cytosolic small ribosomal subunit"/>
    <property type="evidence" value="ECO:0007669"/>
    <property type="project" value="TreeGrafter"/>
</dbReference>
<dbReference type="GO" id="GO:0019843">
    <property type="term" value="F:rRNA binding"/>
    <property type="evidence" value="ECO:0007669"/>
    <property type="project" value="UniProtKB-UniRule"/>
</dbReference>
<dbReference type="GO" id="GO:0003735">
    <property type="term" value="F:structural constituent of ribosome"/>
    <property type="evidence" value="ECO:0007669"/>
    <property type="project" value="InterPro"/>
</dbReference>
<dbReference type="GO" id="GO:0006412">
    <property type="term" value="P:translation"/>
    <property type="evidence" value="ECO:0007669"/>
    <property type="project" value="UniProtKB-UniRule"/>
</dbReference>
<dbReference type="CDD" id="cd00353">
    <property type="entry name" value="Ribosomal_S15p_S13e"/>
    <property type="match status" value="1"/>
</dbReference>
<dbReference type="FunFam" id="1.10.287.10:FF:000002">
    <property type="entry name" value="30S ribosomal protein S15"/>
    <property type="match status" value="1"/>
</dbReference>
<dbReference type="Gene3D" id="6.10.250.3130">
    <property type="match status" value="1"/>
</dbReference>
<dbReference type="Gene3D" id="1.10.287.10">
    <property type="entry name" value="S15/NS1, RNA-binding"/>
    <property type="match status" value="1"/>
</dbReference>
<dbReference type="HAMAP" id="MF_01343_B">
    <property type="entry name" value="Ribosomal_uS15_B"/>
    <property type="match status" value="1"/>
</dbReference>
<dbReference type="InterPro" id="IPR000589">
    <property type="entry name" value="Ribosomal_uS15"/>
</dbReference>
<dbReference type="InterPro" id="IPR005290">
    <property type="entry name" value="Ribosomal_uS15_bac-type"/>
</dbReference>
<dbReference type="InterPro" id="IPR009068">
    <property type="entry name" value="uS15_NS1_RNA-bd_sf"/>
</dbReference>
<dbReference type="NCBIfam" id="TIGR00952">
    <property type="entry name" value="S15_bact"/>
    <property type="match status" value="1"/>
</dbReference>
<dbReference type="PANTHER" id="PTHR23321">
    <property type="entry name" value="RIBOSOMAL PROTEIN S15, BACTERIAL AND ORGANELLAR"/>
    <property type="match status" value="1"/>
</dbReference>
<dbReference type="PANTHER" id="PTHR23321:SF26">
    <property type="entry name" value="SMALL RIBOSOMAL SUBUNIT PROTEIN US15M"/>
    <property type="match status" value="1"/>
</dbReference>
<dbReference type="Pfam" id="PF00312">
    <property type="entry name" value="Ribosomal_S15"/>
    <property type="match status" value="1"/>
</dbReference>
<dbReference type="SMART" id="SM01387">
    <property type="entry name" value="Ribosomal_S15"/>
    <property type="match status" value="1"/>
</dbReference>
<dbReference type="SUPFAM" id="SSF47060">
    <property type="entry name" value="S15/NS1 RNA-binding domain"/>
    <property type="match status" value="1"/>
</dbReference>
<dbReference type="PROSITE" id="PS00362">
    <property type="entry name" value="RIBOSOMAL_S15"/>
    <property type="match status" value="1"/>
</dbReference>
<protein>
    <recommendedName>
        <fullName evidence="1">Small ribosomal subunit protein uS15</fullName>
    </recommendedName>
    <alternativeName>
        <fullName evidence="2">30S ribosomal protein S15</fullName>
    </alternativeName>
</protein>
<evidence type="ECO:0000255" key="1">
    <source>
        <dbReference type="HAMAP-Rule" id="MF_01343"/>
    </source>
</evidence>
<evidence type="ECO:0000305" key="2"/>